<organism>
    <name type="scientific">Homo sapiens</name>
    <name type="common">Human</name>
    <dbReference type="NCBI Taxonomy" id="9606"/>
    <lineage>
        <taxon>Eukaryota</taxon>
        <taxon>Metazoa</taxon>
        <taxon>Chordata</taxon>
        <taxon>Craniata</taxon>
        <taxon>Vertebrata</taxon>
        <taxon>Euteleostomi</taxon>
        <taxon>Mammalia</taxon>
        <taxon>Eutheria</taxon>
        <taxon>Euarchontoglires</taxon>
        <taxon>Primates</taxon>
        <taxon>Haplorrhini</taxon>
        <taxon>Catarrhini</taxon>
        <taxon>Hominidae</taxon>
        <taxon>Homo</taxon>
    </lineage>
</organism>
<feature type="signal peptide" evidence="5 9 10 11 12 13 14">
    <location>
        <begin position="1"/>
        <end position="16"/>
    </location>
</feature>
<feature type="chain" id="PRO_0000022137" description="Salivary acidic proline-rich phosphoprotein 1/2">
    <location>
        <begin position="17"/>
        <end position="166"/>
    </location>
</feature>
<feature type="chain" id="PRO_0000022138" description="Salivary acidic proline-rich phosphoprotein 3/4">
    <location>
        <begin position="17"/>
        <end position="122"/>
    </location>
</feature>
<feature type="chain" id="PRO_0000022139" description="Peptide P-C">
    <location>
        <begin position="123"/>
        <end position="166"/>
    </location>
</feature>
<feature type="region of interest" description="Disordered" evidence="1">
    <location>
        <begin position="16"/>
        <end position="166"/>
    </location>
</feature>
<feature type="region of interest" description="Inhibits hydroxyapatite formation, binds to hydroxyapatite and calcium">
    <location>
        <begin position="17"/>
        <end position="46"/>
    </location>
</feature>
<feature type="compositionally biased region" description="Low complexity" evidence="1">
    <location>
        <begin position="48"/>
        <end position="61"/>
    </location>
</feature>
<feature type="compositionally biased region" description="Low complexity" evidence="1">
    <location>
        <begin position="68"/>
        <end position="82"/>
    </location>
</feature>
<feature type="compositionally biased region" description="Pro residues" evidence="1">
    <location>
        <begin position="83"/>
        <end position="111"/>
    </location>
</feature>
<feature type="compositionally biased region" description="Pro residues" evidence="1">
    <location>
        <begin position="137"/>
        <end position="159"/>
    </location>
</feature>
<feature type="modified residue" description="Pyrrolidone carboxylic acid" evidence="9">
    <location>
        <position position="17"/>
    </location>
</feature>
<feature type="modified residue" description="Phosphoserine; by FAM20C" evidence="3 5 8">
    <location>
        <position position="24"/>
    </location>
</feature>
<feature type="modified residue" description="Phosphoserine; alternate" evidence="5">
    <location>
        <position position="33"/>
    </location>
</feature>
<feature type="modified residue" description="Phosphoserine; by FAM20C; alternate" evidence="3 5 7 8">
    <location>
        <position position="38"/>
    </location>
</feature>
<feature type="glycosylation site" description="O-linked (GlcA) serine; alternate" evidence="3">
    <location>
        <position position="33"/>
    </location>
</feature>
<feature type="glycosylation site" description="O-linked (GlcA) serine; alternate" evidence="7">
    <location>
        <position position="38"/>
    </location>
</feature>
<feature type="sequence variant" id="VAR_005563" description="In allele PRH1-PIF, allele PRH1-PA and allele PRH1-DB; dbSNP:rs1130404.">
    <original>D</original>
    <variation>N</variation>
    <location>
        <position position="20"/>
    </location>
</feature>
<feature type="sequence variant" id="VAR_023240" description="In allele PRH1-PA and allele PRH1-DB; dbSNP:rs2923234.">
    <original>I</original>
    <variation>L</variation>
    <location>
        <position position="42"/>
    </location>
</feature>
<feature type="sequence variant" id="VAR_005564" description="In allele PRH2-2; dbSNP:rs1049112." evidence="4">
    <original>N</original>
    <variation>D</variation>
    <location>
        <position position="66"/>
    </location>
</feature>
<feature type="sequence variant" id="VAR_023241" description="In allele PRH1-DB.">
    <original>Q</original>
    <variation>QGGQQQQGPPPPQGKPQGPPQQ</variation>
    <location>
        <position position="97"/>
    </location>
</feature>
<feature type="sequence variant" id="VAR_023242" description="In allele PRH1-PA; interferes with proteolytic cleavage at Arg-122; dbSNP:rs200488155.">
    <original>R</original>
    <variation>C</variation>
    <location>
        <position position="119"/>
    </location>
</feature>
<feature type="sequence variant" id="VAR_005565" description="In allele PRH2-3; dbSNP:rs74062407." evidence="2">
    <original>Q</original>
    <variation>K</variation>
    <location>
        <position position="163"/>
    </location>
</feature>
<feature type="mutagenesis site" description="Decreased phosphorylation by FAM20C; when associated with A-38." evidence="8">
    <original>S</original>
    <variation>A</variation>
    <location>
        <position position="24"/>
    </location>
</feature>
<feature type="mutagenesis site" description="Decreased phosphorylation by FAM20C; when associated with A-24." evidence="8">
    <original>S</original>
    <variation>A</variation>
    <location>
        <position position="38"/>
    </location>
</feature>
<feature type="sequence conflict" description="In Ref. 11; AA sequence." evidence="15" ref="11">
    <original>F</original>
    <variation>P</variation>
    <location>
        <position position="41"/>
    </location>
</feature>
<comment type="function">
    <text>PRP's act as highly potent inhibitors of crystal growth of calcium phosphates. They provide a protective and reparative environment for dental enamel which is important for the integrity of the teeth.</text>
</comment>
<comment type="interaction">
    <interactant intactId="EBI-738601">
        <id>P02810</id>
    </interactant>
    <interactant intactId="EBI-7147442">
        <id>Q8IXL6</id>
        <label>FAM20C</label>
    </interactant>
    <organismsDiffer>false</organismsDiffer>
    <experiments>2</experiments>
</comment>
<comment type="interaction">
    <interactant intactId="EBI-738601">
        <id>P02810</id>
    </interactant>
    <interactant intactId="EBI-738582">
        <id>Q8TAX7</id>
        <label>MUC7</label>
    </interactant>
    <organismsDiffer>false</organismsDiffer>
    <experiments>2</experiments>
</comment>
<comment type="subcellular location">
    <subcellularLocation>
        <location>Secreted</location>
    </subcellularLocation>
</comment>
<comment type="PTM">
    <text evidence="6">Proteolytically cleaved; PRP-2, PRP-1, PIF-S and Db-S yield PRP-4, PRP-3 (protein A), PIF-F and Db-F, respectively.</text>
</comment>
<comment type="PTM">
    <text evidence="3">A hexuronic acid was shown to be linked to Ser-33 in about 40% of the polypeptides. Neither the structure of the carbohydrate (whether glucuronic acid or an isomer of), nor the linkage (whether a glycoside or an ester) has been definitely established.</text>
</comment>
<comment type="polymorphism">
    <text evidence="15">Sequence shown is that of allele PRH1-PIF, which is the most frequent allele (68% of the population). The PRH1-DB allele (about 16% of the population) has an insertion of 21 repeated amino acids compared to the PRH1-PIF allele. Allele PRH2-2, also known as PR-2, allele PRH2-1 is also known as PR-1 or protein C, and allele PRH2-3 as PR-1'. In contrast to all other PRH1 and PRH2 alleles, the PRH1-PA allele (16%) is not proteolytically cleaved.</text>
</comment>
<comment type="sequence caution" evidence="15">
    <conflict type="erroneous termination">
        <sequence resource="EMBL-CDS" id="AAI28193"/>
    </conflict>
    <text>Extended C-terminus.</text>
</comment>
<comment type="sequence caution" evidence="15">
    <conflict type="erroneous termination">
        <sequence resource="EMBL-CDS" id="AAI41917"/>
    </conflict>
    <text>Extended C-terminus.</text>
</comment>
<proteinExistence type="evidence at protein level"/>
<sequence length="166" mass="17015">MLLILLSVALLAFSSAQDLDEDVSQEDVPLVISDGGDSEQFIDEERQGPPLGGQQSQPSAGDGNQNDGPQQGPPQQGGQQQQGPPPPQGKPQGPPQQGGHPPPPQGRPQGPPQQGGHPRPPRGRPQGPPQQGGHQQGPPPPPPGKPQGPPPQGGRPQGPPQGQSPQ</sequence>
<evidence type="ECO:0000256" key="1">
    <source>
        <dbReference type="SAM" id="MobiDB-lite"/>
    </source>
</evidence>
<evidence type="ECO:0000269" key="2">
    <source>
    </source>
</evidence>
<evidence type="ECO:0000269" key="3">
    <source>
    </source>
</evidence>
<evidence type="ECO:0000269" key="4">
    <source>
    </source>
</evidence>
<evidence type="ECO:0000269" key="5">
    <source>
    </source>
</evidence>
<evidence type="ECO:0000269" key="6">
    <source>
    </source>
</evidence>
<evidence type="ECO:0000269" key="7">
    <source>
    </source>
</evidence>
<evidence type="ECO:0000269" key="8">
    <source>
    </source>
</evidence>
<evidence type="ECO:0000269" key="9">
    <source>
    </source>
</evidence>
<evidence type="ECO:0000269" key="10">
    <source>
    </source>
</evidence>
<evidence type="ECO:0000269" key="11">
    <source>
    </source>
</evidence>
<evidence type="ECO:0000269" key="12">
    <source>
    </source>
</evidence>
<evidence type="ECO:0000269" key="13">
    <source>
    </source>
</evidence>
<evidence type="ECO:0000269" key="14">
    <source ref="11"/>
</evidence>
<evidence type="ECO:0000305" key="15"/>
<accession>P02810</accession>
<accession>A2VCM0</accession>
<accession>A3KN66</accession>
<accession>A5D902</accession>
<accession>B2RMW2</accession>
<accession>Q4VBP2</accession>
<accession>Q53XA2</accession>
<accession>Q6P2F6</accession>
<dbReference type="EMBL" id="K03202">
    <property type="protein sequence ID" value="AAA60183.1"/>
    <property type="molecule type" value="mRNA"/>
</dbReference>
<dbReference type="EMBL" id="K03203">
    <property type="protein sequence ID" value="AAA60184.1"/>
    <property type="molecule type" value="mRNA"/>
</dbReference>
<dbReference type="EMBL" id="M13057">
    <property type="protein sequence ID" value="AAA98807.1"/>
    <property type="molecule type" value="Genomic_DNA"/>
</dbReference>
<dbReference type="EMBL" id="M13058">
    <property type="protein sequence ID" value="AAA98808.1"/>
    <property type="molecule type" value="Genomic_DNA"/>
</dbReference>
<dbReference type="EMBL" id="BX641094">
    <property type="protein sequence ID" value="CAE46044.1"/>
    <property type="molecule type" value="mRNA"/>
</dbReference>
<dbReference type="EMBL" id="CH471094">
    <property type="protein sequence ID" value="EAW96214.1"/>
    <property type="molecule type" value="Genomic_DNA"/>
</dbReference>
<dbReference type="EMBL" id="CH471094">
    <property type="protein sequence ID" value="EAW96219.1"/>
    <property type="molecule type" value="Genomic_DNA"/>
</dbReference>
<dbReference type="EMBL" id="BC095488">
    <property type="protein sequence ID" value="AAH95488.1"/>
    <property type="molecule type" value="mRNA"/>
</dbReference>
<dbReference type="EMBL" id="BC128192">
    <property type="protein sequence ID" value="AAI28193.1"/>
    <property type="status" value="ALT_SEQ"/>
    <property type="molecule type" value="mRNA"/>
</dbReference>
<dbReference type="EMBL" id="BC133676">
    <property type="protein sequence ID" value="AAI33677.1"/>
    <property type="molecule type" value="mRNA"/>
</dbReference>
<dbReference type="EMBL" id="BC136499">
    <property type="protein sequence ID" value="AAI36500.1"/>
    <property type="molecule type" value="mRNA"/>
</dbReference>
<dbReference type="EMBL" id="BC141916">
    <property type="protein sequence ID" value="AAI41917.1"/>
    <property type="status" value="ALT_SEQ"/>
    <property type="molecule type" value="mRNA"/>
</dbReference>
<dbReference type="CCDS" id="CCDS8636.1"/>
<dbReference type="PIR" id="A25372">
    <property type="entry name" value="PIHUSC"/>
</dbReference>
<dbReference type="PIR" id="B25372">
    <property type="entry name" value="B25372"/>
</dbReference>
<dbReference type="RefSeq" id="NP_001103683.1">
    <property type="nucleotide sequence ID" value="NM_001110213.1"/>
</dbReference>
<dbReference type="RefSeq" id="NP_001278243.1">
    <property type="nucleotide sequence ID" value="NM_001291314.1"/>
</dbReference>
<dbReference type="RefSeq" id="NP_001278244.1">
    <property type="nucleotide sequence ID" value="NM_001291315.1"/>
</dbReference>
<dbReference type="BioGRID" id="111545">
    <property type="interactions" value="19"/>
</dbReference>
<dbReference type="BioGRID" id="111546">
    <property type="interactions" value="1"/>
</dbReference>
<dbReference type="FunCoup" id="P02810">
    <property type="interactions" value="44"/>
</dbReference>
<dbReference type="IntAct" id="P02810">
    <property type="interactions" value="8"/>
</dbReference>
<dbReference type="MINT" id="P02810"/>
<dbReference type="STRING" id="9606.ENSP00000379682"/>
<dbReference type="GlyCosmos" id="P02810">
    <property type="glycosylation" value="2 sites, No reported glycans"/>
</dbReference>
<dbReference type="GlyGen" id="P02810">
    <property type="glycosylation" value="2 sites"/>
</dbReference>
<dbReference type="iPTMnet" id="P02810"/>
<dbReference type="PhosphoSitePlus" id="P02810"/>
<dbReference type="BioMuta" id="PRH1"/>
<dbReference type="DMDM" id="131008"/>
<dbReference type="jPOST" id="P02810"/>
<dbReference type="MassIVE" id="P02810"/>
<dbReference type="PaxDb" id="9606-ENSP00000379682"/>
<dbReference type="PeptideAtlas" id="P02810"/>
<dbReference type="ProteomicsDB" id="51603"/>
<dbReference type="Pumba" id="P02810"/>
<dbReference type="TopDownProteomics" id="P02810"/>
<dbReference type="Antibodypedia" id="67598">
    <property type="antibodies" value="72 antibodies from 12 providers"/>
</dbReference>
<dbReference type="DNASU" id="5554"/>
<dbReference type="Ensembl" id="ENST00000381847.7">
    <property type="protein sequence ID" value="ENSP00000371271.3"/>
    <property type="gene ID" value="ENSG00000134551.13"/>
</dbReference>
<dbReference type="Ensembl" id="ENST00000396400.4">
    <property type="protein sequence ID" value="ENSP00000379682.3"/>
    <property type="gene ID" value="ENSG00000134551.13"/>
</dbReference>
<dbReference type="Ensembl" id="ENST00000572141.1">
    <property type="protein sequence ID" value="ENSP00000458690.1"/>
    <property type="gene ID" value="ENSG00000272803.5"/>
</dbReference>
<dbReference type="Ensembl" id="ENST00000575657.5">
    <property type="protein sequence ID" value="ENSP00000461041.1"/>
    <property type="gene ID" value="ENSG00000272803.5"/>
</dbReference>
<dbReference type="Ensembl" id="ENST00000622570.4">
    <property type="protein sequence ID" value="ENSP00000481810.1"/>
    <property type="gene ID" value="ENSG00000275679.4"/>
</dbReference>
<dbReference type="Ensembl" id="ENST00000622848.2">
    <property type="protein sequence ID" value="ENSP00000483458.1"/>
    <property type="gene ID" value="ENSG00000275679.4"/>
</dbReference>
<dbReference type="GeneID" id="5554"/>
<dbReference type="GeneID" id="5555"/>
<dbReference type="KEGG" id="hsa:5554"/>
<dbReference type="KEGG" id="hsa:5555"/>
<dbReference type="MANE-Select" id="ENST00000396400.4">
    <property type="protein sequence ID" value="ENSP00000379682.3"/>
    <property type="RefSeq nucleotide sequence ID" value="NM_001110213.1"/>
    <property type="RefSeq protein sequence ID" value="NP_001103683.1"/>
</dbReference>
<dbReference type="UCSC" id="uc001qzi.5">
    <property type="organism name" value="human"/>
</dbReference>
<dbReference type="AGR" id="HGNC:9366"/>
<dbReference type="AGR" id="HGNC:9367"/>
<dbReference type="CTD" id="5554"/>
<dbReference type="CTD" id="5555"/>
<dbReference type="DisGeNET" id="5554"/>
<dbReference type="DisGeNET" id="5555"/>
<dbReference type="GeneCards" id="PRH1"/>
<dbReference type="GeneCards" id="PRH2"/>
<dbReference type="HGNC" id="HGNC:9366">
    <property type="gene designation" value="PRH1"/>
</dbReference>
<dbReference type="HGNC" id="HGNC:9367">
    <property type="gene designation" value="PRH2"/>
</dbReference>
<dbReference type="HPA" id="ENSG00000134551">
    <property type="expression patterns" value="Tissue enriched (salivary)"/>
</dbReference>
<dbReference type="MIM" id="168730">
    <property type="type" value="gene"/>
</dbReference>
<dbReference type="MIM" id="168790">
    <property type="type" value="gene"/>
</dbReference>
<dbReference type="neXtProt" id="NX_P02810"/>
<dbReference type="OpenTargets" id="ENSG00000134551"/>
<dbReference type="PharmGKB" id="PA33738"/>
<dbReference type="VEuPathDB" id="HostDB:ENSG00000134551"/>
<dbReference type="eggNOG" id="ENOG502TED6">
    <property type="taxonomic scope" value="Eukaryota"/>
</dbReference>
<dbReference type="GeneTree" id="ENSGT00940000165050"/>
<dbReference type="HOGENOM" id="CLU_054768_2_0_1"/>
<dbReference type="InParanoid" id="P02810"/>
<dbReference type="OMA" id="HSEQFLD"/>
<dbReference type="OrthoDB" id="9470910at2759"/>
<dbReference type="PAN-GO" id="P02810">
    <property type="GO annotations" value="0 GO annotations based on evolutionary models"/>
</dbReference>
<dbReference type="PathwayCommons" id="P02810"/>
<dbReference type="SignaLink" id="P02810"/>
<dbReference type="SIGNOR" id="P02810"/>
<dbReference type="BioGRID-ORCS" id="5554">
    <property type="hits" value="13 hits in 289 CRISPR screens"/>
</dbReference>
<dbReference type="BioGRID-ORCS" id="5555">
    <property type="hits" value="19 hits in 1103 CRISPR screens"/>
</dbReference>
<dbReference type="GeneWiki" id="PRH1"/>
<dbReference type="Pharos" id="P02810">
    <property type="development level" value="Tbio"/>
</dbReference>
<dbReference type="PRO" id="PR:P02810"/>
<dbReference type="Proteomes" id="UP000005640">
    <property type="component" value="Chromosome 12"/>
</dbReference>
<dbReference type="RNAct" id="P02810">
    <property type="molecule type" value="protein"/>
</dbReference>
<dbReference type="Bgee" id="ENSG00000134551">
    <property type="expression patterns" value="Expressed in male germ line stem cell (sensu Vertebrata) in testis and 102 other cell types or tissues"/>
</dbReference>
<dbReference type="GO" id="GO:0005615">
    <property type="term" value="C:extracellular space"/>
    <property type="evidence" value="ECO:0000304"/>
    <property type="project" value="ProtInc"/>
</dbReference>
<dbReference type="InterPro" id="IPR026086">
    <property type="entry name" value="Pro-rich"/>
</dbReference>
<dbReference type="PANTHER" id="PTHR23203">
    <property type="entry name" value="PROLINE-RICH PROTEIN"/>
    <property type="match status" value="1"/>
</dbReference>
<dbReference type="PANTHER" id="PTHR23203:SF19">
    <property type="entry name" value="SALIVARY ACIDIC PROLINE-RICH PHOSPHOPROTEIN 1_2"/>
    <property type="match status" value="1"/>
</dbReference>
<dbReference type="Pfam" id="PF15240">
    <property type="entry name" value="Pro-rich"/>
    <property type="match status" value="1"/>
</dbReference>
<dbReference type="SMART" id="SM01412">
    <property type="entry name" value="Pro-rich"/>
    <property type="match status" value="1"/>
</dbReference>
<keyword id="KW-0165">Cleavage on pair of basic residues</keyword>
<keyword id="KW-0903">Direct protein sequencing</keyword>
<keyword id="KW-0325">Glycoprotein</keyword>
<keyword id="KW-0597">Phosphoprotein</keyword>
<keyword id="KW-1267">Proteomics identification</keyword>
<keyword id="KW-0873">Pyrrolidone carboxylic acid</keyword>
<keyword id="KW-1185">Reference proteome</keyword>
<keyword id="KW-0677">Repeat</keyword>
<keyword id="KW-0964">Secreted</keyword>
<keyword id="KW-0732">Signal</keyword>
<reference key="1">
    <citation type="journal article" date="1985" name="J. Biol. Chem.">
        <title>Differential RNA splicing and post-translational cleavages in the human salivary proline-rich protein gene system.</title>
        <authorList>
            <person name="Maeda N."/>
            <person name="Kim H.-S."/>
            <person name="Azen E.A."/>
            <person name="Smithies O."/>
        </authorList>
    </citation>
    <scope>NUCLEOTIDE SEQUENCE [MRNA] (ALLELES PRH1-PIF AND PRH2-1)</scope>
</reference>
<reference key="2">
    <citation type="journal article" date="1986" name="J. Biol. Chem.">
        <title>Structures of two HaeIII-type genes in the human salivary proline-rich protein multigene family.</title>
        <authorList>
            <person name="Kim H.-S."/>
            <person name="Maeda N."/>
        </authorList>
    </citation>
    <scope>NUCLEOTIDE SEQUENCE [GENOMIC DNA] (ALLELES PRH1-PIF AND PRH2-1)</scope>
</reference>
<reference key="3">
    <citation type="journal article" date="2007" name="BMC Genomics">
        <title>The full-ORF clone resource of the German cDNA consortium.</title>
        <authorList>
            <person name="Bechtel S."/>
            <person name="Rosenfelder H."/>
            <person name="Duda A."/>
            <person name="Schmidt C.P."/>
            <person name="Ernst U."/>
            <person name="Wellenreuther R."/>
            <person name="Mehrle A."/>
            <person name="Schuster C."/>
            <person name="Bahr A."/>
            <person name="Bloecker H."/>
            <person name="Heubner D."/>
            <person name="Hoerlein A."/>
            <person name="Michel G."/>
            <person name="Wedler H."/>
            <person name="Koehrer K."/>
            <person name="Ottenwaelder B."/>
            <person name="Poustka A."/>
            <person name="Wiemann S."/>
            <person name="Schupp I."/>
        </authorList>
    </citation>
    <scope>NUCLEOTIDE SEQUENCE [LARGE SCALE MRNA] (ALLELE PRH2-1)</scope>
    <source>
        <tissue>Salivary gland</tissue>
    </source>
</reference>
<reference key="4">
    <citation type="submission" date="2005-07" db="EMBL/GenBank/DDBJ databases">
        <authorList>
            <person name="Mural R.J."/>
            <person name="Istrail S."/>
            <person name="Sutton G.G."/>
            <person name="Florea L."/>
            <person name="Halpern A.L."/>
            <person name="Mobarry C.M."/>
            <person name="Lippert R."/>
            <person name="Walenz B."/>
            <person name="Shatkay H."/>
            <person name="Dew I."/>
            <person name="Miller J.R."/>
            <person name="Flanigan M.J."/>
            <person name="Edwards N.J."/>
            <person name="Bolanos R."/>
            <person name="Fasulo D."/>
            <person name="Halldorsson B.V."/>
            <person name="Hannenhalli S."/>
            <person name="Turner R."/>
            <person name="Yooseph S."/>
            <person name="Lu F."/>
            <person name="Nusskern D.R."/>
            <person name="Shue B.C."/>
            <person name="Zheng X.H."/>
            <person name="Zhong F."/>
            <person name="Delcher A.L."/>
            <person name="Huson D.H."/>
            <person name="Kravitz S.A."/>
            <person name="Mouchard L."/>
            <person name="Reinert K."/>
            <person name="Remington K.A."/>
            <person name="Clark A.G."/>
            <person name="Waterman M.S."/>
            <person name="Eichler E.E."/>
            <person name="Adams M.D."/>
            <person name="Hunkapiller M.W."/>
            <person name="Myers E.W."/>
            <person name="Venter J.C."/>
        </authorList>
    </citation>
    <scope>NUCLEOTIDE SEQUENCE [LARGE SCALE GENOMIC DNA] (ALLELE PRH1-PIF)</scope>
</reference>
<reference key="5">
    <citation type="journal article" date="2004" name="Genome Res.">
        <title>The status, quality, and expansion of the NIH full-length cDNA project: the Mammalian Gene Collection (MGC).</title>
        <authorList>
            <consortium name="The MGC Project Team"/>
        </authorList>
    </citation>
    <scope>NUCLEOTIDE SEQUENCE [LARGE SCALE MRNA] (ALLELES PRH1-DB; PRH1-PIF; PRH2-1 AND PRH2-2)</scope>
    <source>
        <tissue>Thyroid</tissue>
    </source>
</reference>
<reference key="6">
    <citation type="journal article" date="1980" name="J. Biol. Chem.">
        <title>The primary structure of a salivary calcium-binding proline-rich phosphoprotein (protein C), a possible precursor of a related salivary protein A.</title>
        <authorList>
            <person name="Wong R.S.C."/>
            <person name="Bennick A."/>
        </authorList>
    </citation>
    <scope>PROTEIN SEQUENCE OF 17-166 (PROTEIN C)</scope>
    <source>
        <tissue>Saliva</tissue>
    </source>
</reference>
<reference key="7">
    <citation type="journal article" date="1986" name="Int. J. Pept. Protein Res.">
        <title>Complete covalent structure of a proline-rich phosphoprotein, PRP-2, an inhibitor of calcium phosphate crystal growth from human parotid saliva.</title>
        <authorList>
            <person name="Schlesinger D.H."/>
            <person name="Hay D.I."/>
        </authorList>
    </citation>
    <scope>PROTEIN SEQUENCE OF 17-166 (PRP-2)</scope>
    <source>
        <tissue>Saliva</tissue>
    </source>
</reference>
<reference key="8">
    <citation type="journal article" date="1987" name="Am. J. Hum. Genet.">
        <title>Alleles at the PRH1 locus coding for the human salivary-acidic proline-rich proteins Pa, Db, and PIF.</title>
        <authorList>
            <person name="Azen E.A."/>
            <person name="Kim H.S."/>
            <person name="Goodman P."/>
            <person name="Flynn S."/>
            <person name="Maeda N."/>
        </authorList>
    </citation>
    <scope>NUCLEOTIDE SEQUENCE [GENOMIC DNA] OF 17-166 (ALLELES PRH1-PIF; PRH1-PA AND PRH1-DB)</scope>
</reference>
<reference key="9">
    <citation type="journal article" date="1988" name="Biochem. J.">
        <title>The primary structures of six human salivary acidic proline-rich proteins (PRP-1, PRP-2, PRP-3, PRP-4, PIF-s and PIF-f).</title>
        <authorList>
            <person name="Hay D.I."/>
            <person name="Bennick A."/>
            <person name="Schlesinger D.H."/>
            <person name="Minaguchi K."/>
            <person name="Madapallimattam G."/>
            <person name="Schluckebier S.K."/>
        </authorList>
    </citation>
    <scope>PROTEIN SEQUENCE OF 17-166 (PRP-1 TO PRP-4; PIF-F AND PIF-S)</scope>
    <scope>PYROGLUTAMATE FORMATION AT GLN-17</scope>
    <source>
        <tissue>Saliva</tissue>
    </source>
</reference>
<reference key="10">
    <citation type="journal article" date="1979" name="J. Biol. Chem.">
        <title>The complete primary structure of a proline-rich phosphoprotein from human saliva.</title>
        <authorList>
            <person name="Wong R.S.C."/>
            <person name="Hofmann T."/>
            <person name="Bennick A."/>
        </authorList>
    </citation>
    <scope>PROTEIN SEQUENCE OF 17-122 (PROTEIN A)</scope>
    <source>
        <tissue>Saliva</tissue>
    </source>
</reference>
<reference key="11">
    <citation type="book" date="1979" name="Peptides: structure and biological function (Proceedings of the 6th American peptide symposium)">
        <title>Complete primary structure of a proline-rich phosphoprotein (PRP-4), a potent inhibitor of calcium phosphate precipitation in human parotid saliva.</title>
        <editorList>
            <person name="Gross E."/>
            <person name="Meienhofer J."/>
        </editorList>
        <authorList>
            <person name="Schlesinger D.H."/>
            <person name="Hay D.I."/>
        </authorList>
    </citation>
    <scope>PROTEIN SEQUENCE OF 17-122 (PROTEIN A)</scope>
</reference>
<reference key="12">
    <citation type="journal article" date="1981" name="Int. J. Pept. Protein Res.">
        <title>Primary structure of the active tryptic fragments of human and monkey salivary anionic proline-rich proteins.</title>
        <authorList>
            <person name="Schlesinger D.H."/>
            <person name="Hay D.I."/>
        </authorList>
    </citation>
    <scope>PROTEIN SEQUENCE OF 17-46 (PROTEIN C)</scope>
    <source>
        <tissue>Saliva</tissue>
    </source>
</reference>
<reference key="13">
    <citation type="journal article" date="2005" name="Proteomics">
        <title>Different isoforms and post-translational modifications of human salivary acidic proline-rich proteins.</title>
        <authorList>
            <person name="Inzitari R."/>
            <person name="Cabras T."/>
            <person name="Onnis G."/>
            <person name="Olmi C."/>
            <person name="Mastinu A."/>
            <person name="Sanna M.T."/>
            <person name="Pellegrini M.G."/>
            <person name="Castagnola M."/>
            <person name="Messana I."/>
        </authorList>
    </citation>
    <scope>PROTEIN SEQUENCE OF 17-46 (PROTEIN DB-S)</scope>
    <scope>PROTEIN SEQUENCE OF 91-97 (PROTEIN DB-S)</scope>
    <scope>IDENTIFICATION BY MASS SPECTROMETRY OF PIF-S; PIF-F; DB-S; DB-F; PA; PRP-1 TO PRP4 AND PEPTIDE P-C</scope>
    <scope>PHOSPHORYLATION AT SER-24; SER-33 AND SER-38</scope>
    <source>
        <tissue>Saliva</tissue>
    </source>
</reference>
<reference key="14">
    <citation type="journal article" date="1980" name="J. Biochem.">
        <title>The amino acid sequence of a salivary proline-rich peptide, P-C, and its relation to a salivary proline-rich phosphoprotein, protein C.</title>
        <authorList>
            <person name="Isemura S."/>
            <person name="Saitoh E."/>
            <person name="Sanada K."/>
        </authorList>
    </citation>
    <scope>PROTEIN SEQUENCE OF 123-166 (PEPTIDE P-C)</scope>
    <source>
        <tissue>Saliva</tissue>
    </source>
</reference>
<reference key="15">
    <citation type="journal article" date="1991" name="Biochemistry">
        <title>Basic proline-rich proteins from human parotid saliva: relationships of the covalent structures of ten proteins from a single individual.</title>
        <authorList>
            <person name="Kauffman D.L."/>
            <person name="Bennick A."/>
            <person name="Blum M."/>
            <person name="Keller P.J."/>
        </authorList>
    </citation>
    <scope>PROTEIN SEQUENCE OF 123-166</scope>
    <source>
        <tissue>Saliva</tissue>
    </source>
</reference>
<reference key="16">
    <citation type="journal article" date="2000" name="FEBS Lett.">
        <title>A novel Ser O-glucuronidation in acidic proline-rich proteins identified by tandem mass spectrometry.</title>
        <authorList>
            <person name="Jonsson A.P."/>
            <person name="Griffiths W.J."/>
            <person name="Bratt P."/>
            <person name="Johansson I."/>
            <person name="Stroemberg N."/>
            <person name="Joernvall H."/>
            <person name="Bergman T."/>
        </authorList>
    </citation>
    <scope>GLYCOSYLATION AT SER-33</scope>
    <scope>PHOSPHORYLATION AT SER-24 AND SER-38</scope>
    <scope>IDENTIFICATION BY MASS SPECTROMETRY</scope>
</reference>
<reference key="17">
    <citation type="journal article" date="2008" name="J. Biol. Chem.">
        <title>Identification of Lys-Pro-Gln as a novel cleavage site specificity of saliva-associated proteases.</title>
        <authorList>
            <person name="Helmerhorst E.J."/>
            <person name="Sun X."/>
            <person name="Salih E."/>
            <person name="Oppenheim F.G."/>
        </authorList>
    </citation>
    <scope>PROTEOLYTIC PROCESSING</scope>
    <scope>IDENTIFICATION BY MASS SPECTROMETRY</scope>
</reference>
<reference key="18">
    <citation type="journal article" date="2010" name="Proteomics">
        <title>Finding new posttranslational modifications in salivary proline-rich proteins.</title>
        <authorList>
            <person name="Vitorino R."/>
            <person name="Alves R."/>
            <person name="Barros A."/>
            <person name="Caseiro A."/>
            <person name="Ferreira R."/>
            <person name="Lobo M.C."/>
            <person name="Bastos A."/>
            <person name="Duarte J."/>
            <person name="Carvalho D."/>
            <person name="Santos L.L."/>
            <person name="Amado F.L."/>
        </authorList>
    </citation>
    <scope>GLYCOSYLATION AT SER-38</scope>
    <scope>PHOSPHORYLATION AT SER-38</scope>
    <scope>IDENTIFICATION BY MASS SPECTROMETRY</scope>
</reference>
<reference key="19">
    <citation type="journal article" date="2015" name="Cell">
        <title>A single kinase generates the majority of the secreted phosphoproteome.</title>
        <authorList>
            <person name="Tagliabracci V.S."/>
            <person name="Wiley S.E."/>
            <person name="Guo X."/>
            <person name="Kinch L.N."/>
            <person name="Durrant E."/>
            <person name="Wen J."/>
            <person name="Xiao J."/>
            <person name="Cui J."/>
            <person name="Nguyen K.B."/>
            <person name="Engel J.L."/>
            <person name="Coon J.J."/>
            <person name="Grishin N."/>
            <person name="Pinna L.A."/>
            <person name="Pagliarini D.J."/>
            <person name="Dixon J.E."/>
        </authorList>
    </citation>
    <scope>PHOSPHORYLATION AT SER-24 AND SER-38</scope>
    <scope>MUTAGENESIS OF SER-24 AND SER-38</scope>
</reference>
<reference key="20">
    <citation type="journal article" date="1998" name="Hum. Mutat.">
        <title>A frequent mutation in the acidic proline-rich protein gene, PRH2, causing a Q147K change closely adjacent to the bacterial binding domain of the cognate salivary PRP (Pr1') in Afro-Americans.</title>
        <authorList>
            <person name="Azen E.A."/>
        </authorList>
    </citation>
    <scope>VARIANT PRH2-3 LYS-163</scope>
</reference>
<protein>
    <recommendedName>
        <fullName>Salivary acidic proline-rich phosphoprotein 1/2</fullName>
    </recommendedName>
    <alternativeName>
        <fullName>Db-s</fullName>
    </alternativeName>
    <alternativeName>
        <fullName>PRP-1/PRP-2</fullName>
    </alternativeName>
    <alternativeName>
        <fullName>Parotid acidic protein</fullName>
        <shortName>Pa</shortName>
    </alternativeName>
    <alternativeName>
        <fullName>Parotid double-band protein</fullName>
    </alternativeName>
    <alternativeName>
        <fullName>Parotid isoelectric focusing variant protein</fullName>
        <shortName>PIF-S</shortName>
    </alternativeName>
    <alternativeName>
        <fullName>Parotid proline-rich protein 1/2</fullName>
    </alternativeName>
    <alternativeName>
        <fullName>Pr1/Pr2</fullName>
    </alternativeName>
    <alternativeName>
        <fullName>Protein C</fullName>
    </alternativeName>
    <component>
        <recommendedName>
            <fullName>Salivary acidic proline-rich phosphoprotein 1/2</fullName>
        </recommendedName>
    </component>
    <component>
        <recommendedName>
            <fullName>Salivary acidic proline-rich phosphoprotein 3/4</fullName>
        </recommendedName>
        <alternativeName>
            <fullName>Db-F</fullName>
        </alternativeName>
        <alternativeName>
            <fullName>PIF-F</fullName>
        </alternativeName>
        <alternativeName>
            <fullName>PRP-3/PRP-4</fullName>
        </alternativeName>
        <alternativeName>
            <fullName>Protein A</fullName>
        </alternativeName>
    </component>
    <component>
        <recommendedName>
            <fullName>Peptide P-C</fullName>
        </recommendedName>
    </component>
</protein>
<name>PRPC_HUMAN</name>
<gene>
    <name type="primary">PRH1</name>
</gene>
<gene>
    <name type="primary">PRH2</name>
</gene>